<name>RNH_PROMH</name>
<comment type="function">
    <text evidence="1">Endonuclease that specifically degrades the RNA of RNA-DNA hybrids.</text>
</comment>
<comment type="catalytic activity">
    <reaction evidence="1">
        <text>Endonucleolytic cleavage to 5'-phosphomonoester.</text>
        <dbReference type="EC" id="3.1.26.4"/>
    </reaction>
</comment>
<comment type="cofactor">
    <cofactor evidence="1">
        <name>Mg(2+)</name>
        <dbReference type="ChEBI" id="CHEBI:18420"/>
    </cofactor>
    <text evidence="1">Binds 1 Mg(2+) ion per subunit. May bind a second metal ion at a regulatory site, or after substrate binding.</text>
</comment>
<comment type="subunit">
    <text evidence="1">Monomer.</text>
</comment>
<comment type="subcellular location">
    <subcellularLocation>
        <location evidence="1">Cytoplasm</location>
    </subcellularLocation>
</comment>
<comment type="similarity">
    <text evidence="1">Belongs to the RNase H family.</text>
</comment>
<proteinExistence type="inferred from homology"/>
<accession>B4EUG3</accession>
<dbReference type="EC" id="3.1.26.4" evidence="1"/>
<dbReference type="EMBL" id="AM942759">
    <property type="protein sequence ID" value="CAR40651.1"/>
    <property type="molecule type" value="Genomic_DNA"/>
</dbReference>
<dbReference type="RefSeq" id="WP_004244975.1">
    <property type="nucleotide sequence ID" value="NC_010554.1"/>
</dbReference>
<dbReference type="SMR" id="B4EUG3"/>
<dbReference type="EnsemblBacteria" id="CAR40651">
    <property type="protein sequence ID" value="CAR40651"/>
    <property type="gene ID" value="PMI0227"/>
</dbReference>
<dbReference type="GeneID" id="6800990"/>
<dbReference type="KEGG" id="pmr:PMI0227"/>
<dbReference type="eggNOG" id="COG0328">
    <property type="taxonomic scope" value="Bacteria"/>
</dbReference>
<dbReference type="HOGENOM" id="CLU_030894_6_0_6"/>
<dbReference type="Proteomes" id="UP000008319">
    <property type="component" value="Chromosome"/>
</dbReference>
<dbReference type="GO" id="GO:0005737">
    <property type="term" value="C:cytoplasm"/>
    <property type="evidence" value="ECO:0007669"/>
    <property type="project" value="UniProtKB-SubCell"/>
</dbReference>
<dbReference type="GO" id="GO:0000287">
    <property type="term" value="F:magnesium ion binding"/>
    <property type="evidence" value="ECO:0007669"/>
    <property type="project" value="UniProtKB-UniRule"/>
</dbReference>
<dbReference type="GO" id="GO:0003676">
    <property type="term" value="F:nucleic acid binding"/>
    <property type="evidence" value="ECO:0007669"/>
    <property type="project" value="InterPro"/>
</dbReference>
<dbReference type="GO" id="GO:0004523">
    <property type="term" value="F:RNA-DNA hybrid ribonuclease activity"/>
    <property type="evidence" value="ECO:0007669"/>
    <property type="project" value="UniProtKB-UniRule"/>
</dbReference>
<dbReference type="GO" id="GO:0043137">
    <property type="term" value="P:DNA replication, removal of RNA primer"/>
    <property type="evidence" value="ECO:0007669"/>
    <property type="project" value="TreeGrafter"/>
</dbReference>
<dbReference type="CDD" id="cd09278">
    <property type="entry name" value="RNase_HI_prokaryote_like"/>
    <property type="match status" value="1"/>
</dbReference>
<dbReference type="FunFam" id="3.30.420.10:FF:000008">
    <property type="entry name" value="Ribonuclease H"/>
    <property type="match status" value="1"/>
</dbReference>
<dbReference type="Gene3D" id="3.30.420.10">
    <property type="entry name" value="Ribonuclease H-like superfamily/Ribonuclease H"/>
    <property type="match status" value="1"/>
</dbReference>
<dbReference type="HAMAP" id="MF_00042">
    <property type="entry name" value="RNase_H"/>
    <property type="match status" value="1"/>
</dbReference>
<dbReference type="InterPro" id="IPR050092">
    <property type="entry name" value="RNase_H"/>
</dbReference>
<dbReference type="InterPro" id="IPR012337">
    <property type="entry name" value="RNaseH-like_sf"/>
</dbReference>
<dbReference type="InterPro" id="IPR002156">
    <property type="entry name" value="RNaseH_domain"/>
</dbReference>
<dbReference type="InterPro" id="IPR036397">
    <property type="entry name" value="RNaseH_sf"/>
</dbReference>
<dbReference type="InterPro" id="IPR022892">
    <property type="entry name" value="RNaseHI"/>
</dbReference>
<dbReference type="NCBIfam" id="NF001236">
    <property type="entry name" value="PRK00203.1"/>
    <property type="match status" value="1"/>
</dbReference>
<dbReference type="PANTHER" id="PTHR10642">
    <property type="entry name" value="RIBONUCLEASE H1"/>
    <property type="match status" value="1"/>
</dbReference>
<dbReference type="PANTHER" id="PTHR10642:SF26">
    <property type="entry name" value="RIBONUCLEASE H1"/>
    <property type="match status" value="1"/>
</dbReference>
<dbReference type="Pfam" id="PF00075">
    <property type="entry name" value="RNase_H"/>
    <property type="match status" value="1"/>
</dbReference>
<dbReference type="SUPFAM" id="SSF53098">
    <property type="entry name" value="Ribonuclease H-like"/>
    <property type="match status" value="1"/>
</dbReference>
<dbReference type="PROSITE" id="PS50879">
    <property type="entry name" value="RNASE_H_1"/>
    <property type="match status" value="1"/>
</dbReference>
<gene>
    <name evidence="1" type="primary">rnhA</name>
    <name type="ordered locus">PMI0227</name>
</gene>
<evidence type="ECO:0000255" key="1">
    <source>
        <dbReference type="HAMAP-Rule" id="MF_00042"/>
    </source>
</evidence>
<evidence type="ECO:0000255" key="2">
    <source>
        <dbReference type="PROSITE-ProRule" id="PRU00408"/>
    </source>
</evidence>
<evidence type="ECO:0000256" key="3">
    <source>
        <dbReference type="SAM" id="MobiDB-lite"/>
    </source>
</evidence>
<reference key="1">
    <citation type="journal article" date="2008" name="J. Bacteriol.">
        <title>Complete genome sequence of uropathogenic Proteus mirabilis, a master of both adherence and motility.</title>
        <authorList>
            <person name="Pearson M.M."/>
            <person name="Sebaihia M."/>
            <person name="Churcher C."/>
            <person name="Quail M.A."/>
            <person name="Seshasayee A.S."/>
            <person name="Luscombe N.M."/>
            <person name="Abdellah Z."/>
            <person name="Arrosmith C."/>
            <person name="Atkin B."/>
            <person name="Chillingworth T."/>
            <person name="Hauser H."/>
            <person name="Jagels K."/>
            <person name="Moule S."/>
            <person name="Mungall K."/>
            <person name="Norbertczak H."/>
            <person name="Rabbinowitsch E."/>
            <person name="Walker D."/>
            <person name="Whithead S."/>
            <person name="Thomson N.R."/>
            <person name="Rather P.N."/>
            <person name="Parkhill J."/>
            <person name="Mobley H.L.T."/>
        </authorList>
    </citation>
    <scope>NUCLEOTIDE SEQUENCE [LARGE SCALE GENOMIC DNA]</scope>
    <source>
        <strain>HI4320</strain>
    </source>
</reference>
<sequence length="159" mass="18309">MHKQVEIFTDGSCLGNPGPGGYGAILRYQQHEKTLSEGFFMTTNNRMELLAAIVALEALKFPCKITLTTDSQYVRQGITKWIHSWKKRQWRKADKSPVLNVDLWKRLDKAIERHEIEWHWVKGHAGHDENERCDELAKAAAQSPTKEDTGYLESQQDKT</sequence>
<keyword id="KW-0963">Cytoplasm</keyword>
<keyword id="KW-0255">Endonuclease</keyword>
<keyword id="KW-0378">Hydrolase</keyword>
<keyword id="KW-0460">Magnesium</keyword>
<keyword id="KW-0479">Metal-binding</keyword>
<keyword id="KW-0540">Nuclease</keyword>
<keyword id="KW-1185">Reference proteome</keyword>
<organism>
    <name type="scientific">Proteus mirabilis (strain HI4320)</name>
    <dbReference type="NCBI Taxonomy" id="529507"/>
    <lineage>
        <taxon>Bacteria</taxon>
        <taxon>Pseudomonadati</taxon>
        <taxon>Pseudomonadota</taxon>
        <taxon>Gammaproteobacteria</taxon>
        <taxon>Enterobacterales</taxon>
        <taxon>Morganellaceae</taxon>
        <taxon>Proteus</taxon>
    </lineage>
</organism>
<protein>
    <recommendedName>
        <fullName evidence="1">Ribonuclease H</fullName>
        <shortName evidence="1">RNase H</shortName>
        <ecNumber evidence="1">3.1.26.4</ecNumber>
    </recommendedName>
</protein>
<feature type="chain" id="PRO_1000090908" description="Ribonuclease H">
    <location>
        <begin position="1"/>
        <end position="159"/>
    </location>
</feature>
<feature type="domain" description="RNase H type-1" evidence="2">
    <location>
        <begin position="1"/>
        <end position="142"/>
    </location>
</feature>
<feature type="region of interest" description="Disordered" evidence="3">
    <location>
        <begin position="135"/>
        <end position="159"/>
    </location>
</feature>
<feature type="compositionally biased region" description="Basic and acidic residues" evidence="3">
    <location>
        <begin position="145"/>
        <end position="159"/>
    </location>
</feature>
<feature type="binding site" evidence="1">
    <location>
        <position position="10"/>
    </location>
    <ligand>
        <name>Mg(2+)</name>
        <dbReference type="ChEBI" id="CHEBI:18420"/>
        <label>1</label>
    </ligand>
</feature>
<feature type="binding site" evidence="1">
    <location>
        <position position="10"/>
    </location>
    <ligand>
        <name>Mg(2+)</name>
        <dbReference type="ChEBI" id="CHEBI:18420"/>
        <label>2</label>
    </ligand>
</feature>
<feature type="binding site" evidence="1">
    <location>
        <position position="48"/>
    </location>
    <ligand>
        <name>Mg(2+)</name>
        <dbReference type="ChEBI" id="CHEBI:18420"/>
        <label>1</label>
    </ligand>
</feature>
<feature type="binding site" evidence="1">
    <location>
        <position position="70"/>
    </location>
    <ligand>
        <name>Mg(2+)</name>
        <dbReference type="ChEBI" id="CHEBI:18420"/>
        <label>1</label>
    </ligand>
</feature>
<feature type="binding site" evidence="1">
    <location>
        <position position="134"/>
    </location>
    <ligand>
        <name>Mg(2+)</name>
        <dbReference type="ChEBI" id="CHEBI:18420"/>
        <label>2</label>
    </ligand>
</feature>